<proteinExistence type="evidence at protein level"/>
<keyword id="KW-0037">Angiogenesis</keyword>
<keyword id="KW-0963">Cytoplasm</keyword>
<keyword id="KW-0238">DNA-binding</keyword>
<keyword id="KW-1017">Isopeptide bond</keyword>
<keyword id="KW-0472">Membrane</keyword>
<keyword id="KW-0479">Metal-binding</keyword>
<keyword id="KW-0539">Nucleus</keyword>
<keyword id="KW-1267">Proteomics identification</keyword>
<keyword id="KW-1185">Reference proteome</keyword>
<keyword id="KW-0677">Repeat</keyword>
<keyword id="KW-0678">Repressor</keyword>
<keyword id="KW-0804">Transcription</keyword>
<keyword id="KW-0805">Transcription regulation</keyword>
<keyword id="KW-0832">Ubl conjugation</keyword>
<keyword id="KW-0862">Zinc</keyword>
<keyword id="KW-0863">Zinc-finger</keyword>
<reference key="1">
    <citation type="journal article" date="2004" name="Biochem. Biophys. Res. Commun.">
        <title>Cloning and characterization of a novel human zinc finger gene, hKid3, from a C2H2-ZNF enriched human embryonic cDNA library.</title>
        <authorList>
            <person name="Gao L."/>
            <person name="Sun C."/>
            <person name="Qiu H.-L."/>
            <person name="Liu H."/>
            <person name="Shao H.-J."/>
            <person name="Wang J."/>
            <person name="Li W.-X."/>
        </authorList>
    </citation>
    <scope>NUCLEOTIDE SEQUENCE [MRNA]</scope>
    <scope>FUNCTION</scope>
    <scope>SUBCELLULAR LOCATION</scope>
    <scope>TISSUE SPECIFICITY</scope>
    <scope>DEVELOPMENTAL STAGE</scope>
    <scope>DOMAIN KRAB</scope>
    <source>
        <tissue>Kidney</tissue>
    </source>
</reference>
<reference key="2">
    <citation type="journal article" date="2004" name="Genome Res.">
        <title>The status, quality, and expansion of the NIH full-length cDNA project: the Mammalian Gene Collection (MGC).</title>
        <authorList>
            <consortium name="The MGC Project Team"/>
        </authorList>
    </citation>
    <scope>NUCLEOTIDE SEQUENCE [LARGE SCALE MRNA]</scope>
    <scope>VARIANT LYS-250</scope>
    <source>
        <tissue>Placenta</tissue>
    </source>
</reference>
<reference key="3">
    <citation type="submission" date="2001-06" db="EMBL/GenBank/DDBJ databases">
        <title>A novel zinc finger gene, KID3.</title>
        <authorList>
            <person name="Gou D.-M."/>
            <person name="Li W.-X."/>
            <person name="Gao L."/>
            <person name="Sun Y."/>
        </authorList>
    </citation>
    <scope>NUCLEOTIDE SEQUENCE [MRNA] OF 10-554</scope>
</reference>
<reference key="4">
    <citation type="journal article" date="2017" name="Nat. Struct. Mol. Biol.">
        <title>Site-specific mapping of the human SUMO proteome reveals co-modification with phosphorylation.</title>
        <authorList>
            <person name="Hendriks I.A."/>
            <person name="Lyon D."/>
            <person name="Young C."/>
            <person name="Jensen L.J."/>
            <person name="Vertegaal A.C."/>
            <person name="Nielsen M.L."/>
        </authorList>
    </citation>
    <scope>SUMOYLATION [LARGE SCALE ANALYSIS] AT LYS-111; LYS-167; LYS-198 AND LYS-531</scope>
    <scope>IDENTIFICATION BY MASS SPECTROMETRY [LARGE SCALE ANALYSIS]</scope>
</reference>
<reference key="5">
    <citation type="journal article" date="2020" name="Sci. Rep.">
        <title>ZNF354C is a transcriptional repressor that inhibits endothelial angiogenic sprouting.</title>
        <authorList>
            <person name="Oo J.A."/>
            <person name="Irmer B."/>
            <person name="Guenther S."/>
            <person name="Warwick T."/>
            <person name="Palfi K."/>
            <person name="Izquierdo Ponce J."/>
            <person name="Teichmann T."/>
            <person name="Pflueger-Mueller B."/>
            <person name="Gilsbach R."/>
            <person name="Brandes R.P."/>
            <person name="Leisegang M.S."/>
        </authorList>
    </citation>
    <scope>FUNCTION</scope>
    <scope>SUBCELLULAR LOCATION</scope>
    <scope>TISSUE SPECIFICITY</scope>
    <scope>INTERACTION WITH TRIM28</scope>
    <scope>MUTAGENESIS OF 16-ASP--VAL-17; 25-GLU--TRP-26 AND 41-MET--GLU-43</scope>
    <scope>DOMAIN KRAB</scope>
</reference>
<organism>
    <name type="scientific">Homo sapiens</name>
    <name type="common">Human</name>
    <dbReference type="NCBI Taxonomy" id="9606"/>
    <lineage>
        <taxon>Eukaryota</taxon>
        <taxon>Metazoa</taxon>
        <taxon>Chordata</taxon>
        <taxon>Craniata</taxon>
        <taxon>Vertebrata</taxon>
        <taxon>Euteleostomi</taxon>
        <taxon>Mammalia</taxon>
        <taxon>Eutheria</taxon>
        <taxon>Euarchontoglires</taxon>
        <taxon>Primates</taxon>
        <taxon>Haplorrhini</taxon>
        <taxon>Catarrhini</taxon>
        <taxon>Hominidae</taxon>
        <taxon>Homo</taxon>
    </lineage>
</organism>
<comment type="function">
    <text evidence="1 2 6 7">Transcriptional repressor that inhibits endothelial angiogenic sprouting (PubMed:15555547, PubMed:33154469). Suppresses osteogenic effects of RUNX2 and may be involved in osteoblastic differentiation (By similarity). Plays a role in postnatal myogenesis, may be involved in the regulation of satellite cells self-renewal (By similarity).</text>
</comment>
<comment type="subunit">
    <text evidence="2 7">Interacts with RUNX2. Binds consensus element OSE2 (By similarity). Interacts with TRIM28 (PubMed:33154469).</text>
</comment>
<comment type="subcellular location">
    <subcellularLocation>
        <location evidence="6 7">Nucleus</location>
    </subcellularLocation>
    <subcellularLocation>
        <location evidence="7">Nucleus membrane</location>
    </subcellularLocation>
    <subcellularLocation>
        <location evidence="7">Cytoplasm</location>
    </subcellularLocation>
</comment>
<comment type="tissue specificity">
    <text evidence="6 7">Expressed in kidney and skeletal muscle. Very low expression in brain and heart (PubMed:15555547). Strongly expressed in vascular cells such as umbilical vein endothelial cells, microvascular endothelial cells and aortic smooth muscle cells (PubMed:33154469).</text>
</comment>
<comment type="developmental stage">
    <text evidence="6">Expressed in fetal brain and kidney. Very low expression in fetal lung and liver.</text>
</comment>
<comment type="domain">
    <text evidence="2 7">KRAB domain is essential for transcriptional repressor activity and ability to inhibit endothelial angiogenic sprouting (PubMed:33154469). Not required for nuclear targeting or for DNA binding (By similarity).</text>
</comment>
<comment type="domain">
    <text evidence="2">Zinc finger region is involved in nuclear targeting and DNA-binding.</text>
</comment>
<comment type="similarity">
    <text evidence="8">Belongs to the krueppel C2H2-type zinc-finger protein family.</text>
</comment>
<comment type="sequence caution" evidence="8">
    <conflict type="frameshift">
        <sequence resource="EMBL-CDS" id="AAH63312"/>
    </conflict>
</comment>
<name>Z354C_HUMAN</name>
<protein>
    <recommendedName>
        <fullName>Zinc finger protein 354C</fullName>
    </recommendedName>
    <alternativeName>
        <fullName>Kidney, ischemia, and developmentally-regulated protein 3</fullName>
        <shortName>hKID3</shortName>
    </alternativeName>
</protein>
<accession>Q86Y25</accession>
<accession>Q6P4P9</accession>
<accession>Q8NFX1</accession>
<evidence type="ECO:0000250" key="1">
    <source>
        <dbReference type="UniProtKB" id="Q571J5"/>
    </source>
</evidence>
<evidence type="ECO:0000250" key="2">
    <source>
        <dbReference type="UniProtKB" id="Q9EPU7"/>
    </source>
</evidence>
<evidence type="ECO:0000255" key="3">
    <source>
        <dbReference type="PROSITE-ProRule" id="PRU00042"/>
    </source>
</evidence>
<evidence type="ECO:0000255" key="4">
    <source>
        <dbReference type="PROSITE-ProRule" id="PRU00119"/>
    </source>
</evidence>
<evidence type="ECO:0000269" key="5">
    <source>
    </source>
</evidence>
<evidence type="ECO:0000269" key="6">
    <source>
    </source>
</evidence>
<evidence type="ECO:0000269" key="7">
    <source>
    </source>
</evidence>
<evidence type="ECO:0000305" key="8"/>
<evidence type="ECO:0007744" key="9">
    <source>
    </source>
</evidence>
<feature type="chain" id="PRO_0000280408" description="Zinc finger protein 354C">
    <location>
        <begin position="1"/>
        <end position="554"/>
    </location>
</feature>
<feature type="domain" description="KRAB" evidence="4">
    <location>
        <begin position="12"/>
        <end position="83"/>
    </location>
</feature>
<feature type="zinc finger region" description="C2H2-type 1" evidence="3">
    <location>
        <begin position="216"/>
        <end position="238"/>
    </location>
</feature>
<feature type="zinc finger region" description="C2H2-type 2" evidence="3">
    <location>
        <begin position="244"/>
        <end position="266"/>
    </location>
</feature>
<feature type="zinc finger region" description="C2H2-type 3" evidence="3">
    <location>
        <begin position="272"/>
        <end position="294"/>
    </location>
</feature>
<feature type="zinc finger region" description="C2H2-type 4" evidence="3">
    <location>
        <begin position="300"/>
        <end position="322"/>
    </location>
</feature>
<feature type="zinc finger region" description="C2H2-type 5" evidence="3">
    <location>
        <begin position="328"/>
        <end position="350"/>
    </location>
</feature>
<feature type="zinc finger region" description="C2H2-type 6" evidence="3">
    <location>
        <begin position="356"/>
        <end position="378"/>
    </location>
</feature>
<feature type="zinc finger region" description="C2H2-type 7" evidence="3">
    <location>
        <begin position="384"/>
        <end position="406"/>
    </location>
</feature>
<feature type="zinc finger region" description="C2H2-type 8" evidence="3">
    <location>
        <begin position="412"/>
        <end position="434"/>
    </location>
</feature>
<feature type="zinc finger region" description="C2H2-type 9" evidence="3">
    <location>
        <begin position="440"/>
        <end position="462"/>
    </location>
</feature>
<feature type="zinc finger region" description="C2H2-type 10" evidence="3">
    <location>
        <begin position="468"/>
        <end position="490"/>
    </location>
</feature>
<feature type="zinc finger region" description="C2H2-type 11" evidence="3">
    <location>
        <begin position="496"/>
        <end position="518"/>
    </location>
</feature>
<feature type="cross-link" description="Glycyl lysine isopeptide (Lys-Gly) (interchain with G-Cter in SUMO2)" evidence="9">
    <location>
        <position position="111"/>
    </location>
</feature>
<feature type="cross-link" description="Glycyl lysine isopeptide (Lys-Gly) (interchain with G-Cter in SUMO2)" evidence="9">
    <location>
        <position position="167"/>
    </location>
</feature>
<feature type="cross-link" description="Glycyl lysine isopeptide (Lys-Gly) (interchain with G-Cter in SUMO2)" evidence="9">
    <location>
        <position position="198"/>
    </location>
</feature>
<feature type="cross-link" description="Glycyl lysine isopeptide (Lys-Gly) (interchain with G-Cter in SUMO2)" evidence="9">
    <location>
        <position position="531"/>
    </location>
</feature>
<feature type="sequence variant" id="VAR_031138" description="In dbSNP:rs17855823." evidence="5">
    <original>E</original>
    <variation>K</variation>
    <location>
        <position position="250"/>
    </location>
</feature>
<feature type="sequence variant" id="VAR_031139" description="In dbSNP:rs1445846.">
    <original>F</original>
    <variation>L</variation>
    <location>
        <position position="546"/>
    </location>
</feature>
<feature type="sequence variant" id="VAR_031140" description="In dbSNP:rs1445845.">
    <original>E</original>
    <variation>K</variation>
    <location>
        <position position="553"/>
    </location>
</feature>
<feature type="mutagenesis site" description="Slight decrease in transcriptional repressor activity. Loss of inhibition of endothelial sprouting." evidence="7">
    <original>DV</original>
    <variation>AA</variation>
    <location>
        <begin position="16"/>
        <end position="17"/>
    </location>
</feature>
<feature type="mutagenesis site" description="Slight decrease in transcriptional repressor activity. No effect on inhibition of endothelial sprouting." evidence="7">
    <original>EW</original>
    <variation>AA</variation>
    <location>
        <begin position="25"/>
        <end position="26"/>
    </location>
</feature>
<feature type="mutagenesis site" description="Loss of transcriptional repressor activity and inhibition of endothelial sprouting." evidence="7">
    <original>MLE</original>
    <variation>KKK</variation>
    <location>
        <begin position="41"/>
        <end position="43"/>
    </location>
</feature>
<feature type="sequence conflict" description="In Ref. 3; AAM69676." evidence="8" ref="3">
    <original>Q</original>
    <variation>H</variation>
    <location>
        <position position="375"/>
    </location>
</feature>
<feature type="sequence conflict" description="In Ref. 3; AAM69676." evidence="8" ref="3">
    <original>N</original>
    <variation>T</variation>
    <location>
        <position position="415"/>
    </location>
</feature>
<dbReference type="EMBL" id="AF525463">
    <property type="protein sequence ID" value="AAO83897.1"/>
    <property type="molecule type" value="mRNA"/>
</dbReference>
<dbReference type="EMBL" id="BC063312">
    <property type="protein sequence ID" value="AAH63312.1"/>
    <property type="status" value="ALT_FRAME"/>
    <property type="molecule type" value="mRNA"/>
</dbReference>
<dbReference type="EMBL" id="AF395540">
    <property type="protein sequence ID" value="AAM69676.1"/>
    <property type="molecule type" value="mRNA"/>
</dbReference>
<dbReference type="CCDS" id="CCDS4443.1"/>
<dbReference type="RefSeq" id="NP_055409.1">
    <property type="nucleotide sequence ID" value="NM_014594.3"/>
</dbReference>
<dbReference type="RefSeq" id="XP_016864898.1">
    <property type="nucleotide sequence ID" value="XM_017009409.2"/>
</dbReference>
<dbReference type="RefSeq" id="XP_054208454.1">
    <property type="nucleotide sequence ID" value="XM_054352479.1"/>
</dbReference>
<dbReference type="SMR" id="Q86Y25"/>
<dbReference type="BioGRID" id="119048">
    <property type="interactions" value="30"/>
</dbReference>
<dbReference type="FunCoup" id="Q86Y25">
    <property type="interactions" value="562"/>
</dbReference>
<dbReference type="IntAct" id="Q86Y25">
    <property type="interactions" value="20"/>
</dbReference>
<dbReference type="STRING" id="9606.ENSP00000324064"/>
<dbReference type="GlyGen" id="Q86Y25">
    <property type="glycosylation" value="1 site, 1 O-linked glycan (1 site)"/>
</dbReference>
<dbReference type="iPTMnet" id="Q86Y25"/>
<dbReference type="PhosphoSitePlus" id="Q86Y25"/>
<dbReference type="BioMuta" id="ZNF354C"/>
<dbReference type="DMDM" id="74762464"/>
<dbReference type="jPOST" id="Q86Y25"/>
<dbReference type="MassIVE" id="Q86Y25"/>
<dbReference type="PaxDb" id="9606-ENSP00000324064"/>
<dbReference type="PeptideAtlas" id="Q86Y25"/>
<dbReference type="ProteomicsDB" id="70354"/>
<dbReference type="Antibodypedia" id="29471">
    <property type="antibodies" value="55 antibodies from 13 providers"/>
</dbReference>
<dbReference type="DNASU" id="30832"/>
<dbReference type="Ensembl" id="ENST00000315475.7">
    <property type="protein sequence ID" value="ENSP00000324064.6"/>
    <property type="gene ID" value="ENSG00000177932.7"/>
</dbReference>
<dbReference type="GeneID" id="30832"/>
<dbReference type="KEGG" id="hsa:30832"/>
<dbReference type="MANE-Select" id="ENST00000315475.7">
    <property type="protein sequence ID" value="ENSP00000324064.6"/>
    <property type="RefSeq nucleotide sequence ID" value="NM_014594.3"/>
    <property type="RefSeq protein sequence ID" value="NP_055409.1"/>
</dbReference>
<dbReference type="UCSC" id="uc003mju.4">
    <property type="organism name" value="human"/>
</dbReference>
<dbReference type="AGR" id="HGNC:16736"/>
<dbReference type="CTD" id="30832"/>
<dbReference type="DisGeNET" id="30832"/>
<dbReference type="GeneCards" id="ZNF354C"/>
<dbReference type="HGNC" id="HGNC:16736">
    <property type="gene designation" value="ZNF354C"/>
</dbReference>
<dbReference type="HPA" id="ENSG00000177932">
    <property type="expression patterns" value="Low tissue specificity"/>
</dbReference>
<dbReference type="MIM" id="619511">
    <property type="type" value="gene"/>
</dbReference>
<dbReference type="neXtProt" id="NX_Q86Y25"/>
<dbReference type="OpenTargets" id="ENSG00000177932"/>
<dbReference type="PharmGKB" id="PA38184"/>
<dbReference type="VEuPathDB" id="HostDB:ENSG00000177932"/>
<dbReference type="eggNOG" id="KOG1721">
    <property type="taxonomic scope" value="Eukaryota"/>
</dbReference>
<dbReference type="GeneTree" id="ENSGT00940000162715"/>
<dbReference type="HOGENOM" id="CLU_002678_0_9_1"/>
<dbReference type="InParanoid" id="Q86Y25"/>
<dbReference type="OMA" id="STFIEHQ"/>
<dbReference type="OrthoDB" id="6077919at2759"/>
<dbReference type="PAN-GO" id="Q86Y25">
    <property type="GO annotations" value="4 GO annotations based on evolutionary models"/>
</dbReference>
<dbReference type="PhylomeDB" id="Q86Y25"/>
<dbReference type="TreeFam" id="TF350822"/>
<dbReference type="PathwayCommons" id="Q86Y25"/>
<dbReference type="Reactome" id="R-HSA-212436">
    <property type="pathway name" value="Generic Transcription Pathway"/>
</dbReference>
<dbReference type="SignaLink" id="Q86Y25"/>
<dbReference type="BioGRID-ORCS" id="30832">
    <property type="hits" value="4 hits in 1163 CRISPR screens"/>
</dbReference>
<dbReference type="ChiTaRS" id="ZNF354C">
    <property type="organism name" value="human"/>
</dbReference>
<dbReference type="GenomeRNAi" id="30832"/>
<dbReference type="Pharos" id="Q86Y25">
    <property type="development level" value="Tdark"/>
</dbReference>
<dbReference type="PRO" id="PR:Q86Y25"/>
<dbReference type="Proteomes" id="UP000005640">
    <property type="component" value="Chromosome 5"/>
</dbReference>
<dbReference type="RNAct" id="Q86Y25">
    <property type="molecule type" value="protein"/>
</dbReference>
<dbReference type="Bgee" id="ENSG00000177932">
    <property type="expression patterns" value="Expressed in cortical plate and 157 other cell types or tissues"/>
</dbReference>
<dbReference type="GO" id="GO:0005737">
    <property type="term" value="C:cytoplasm"/>
    <property type="evidence" value="ECO:0000314"/>
    <property type="project" value="UniProtKB"/>
</dbReference>
<dbReference type="GO" id="GO:0031965">
    <property type="term" value="C:nuclear membrane"/>
    <property type="evidence" value="ECO:0000314"/>
    <property type="project" value="UniProtKB"/>
</dbReference>
<dbReference type="GO" id="GO:0005654">
    <property type="term" value="C:nucleoplasm"/>
    <property type="evidence" value="ECO:0000314"/>
    <property type="project" value="HPA"/>
</dbReference>
<dbReference type="GO" id="GO:0005634">
    <property type="term" value="C:nucleus"/>
    <property type="evidence" value="ECO:0000314"/>
    <property type="project" value="UniProtKB"/>
</dbReference>
<dbReference type="GO" id="GO:0000981">
    <property type="term" value="F:DNA-binding transcription factor activity, RNA polymerase II-specific"/>
    <property type="evidence" value="ECO:0000318"/>
    <property type="project" value="GO_Central"/>
</dbReference>
<dbReference type="GO" id="GO:0001227">
    <property type="term" value="F:DNA-binding transcription repressor activity, RNA polymerase II-specific"/>
    <property type="evidence" value="ECO:0000315"/>
    <property type="project" value="UniProtKB"/>
</dbReference>
<dbReference type="GO" id="GO:0000978">
    <property type="term" value="F:RNA polymerase II cis-regulatory region sequence-specific DNA binding"/>
    <property type="evidence" value="ECO:0000318"/>
    <property type="project" value="GO_Central"/>
</dbReference>
<dbReference type="GO" id="GO:0008270">
    <property type="term" value="F:zinc ion binding"/>
    <property type="evidence" value="ECO:0007669"/>
    <property type="project" value="UniProtKB-KW"/>
</dbReference>
<dbReference type="GO" id="GO:0001525">
    <property type="term" value="P:angiogenesis"/>
    <property type="evidence" value="ECO:0007669"/>
    <property type="project" value="UniProtKB-KW"/>
</dbReference>
<dbReference type="GO" id="GO:1903671">
    <property type="term" value="P:negative regulation of sprouting angiogenesis"/>
    <property type="evidence" value="ECO:0000315"/>
    <property type="project" value="UniProtKB"/>
</dbReference>
<dbReference type="GO" id="GO:0006357">
    <property type="term" value="P:regulation of transcription by RNA polymerase II"/>
    <property type="evidence" value="ECO:0000318"/>
    <property type="project" value="GO_Central"/>
</dbReference>
<dbReference type="CDD" id="cd07765">
    <property type="entry name" value="KRAB_A-box"/>
    <property type="match status" value="1"/>
</dbReference>
<dbReference type="FunFam" id="3.30.160.60:FF:002343">
    <property type="entry name" value="Zinc finger protein 33A"/>
    <property type="match status" value="1"/>
</dbReference>
<dbReference type="FunFam" id="3.30.160.60:FF:000690">
    <property type="entry name" value="Zinc finger protein 354C"/>
    <property type="match status" value="2"/>
</dbReference>
<dbReference type="FunFam" id="3.30.160.60:FF:001291">
    <property type="entry name" value="Zinc finger protein 354C"/>
    <property type="match status" value="1"/>
</dbReference>
<dbReference type="FunFam" id="3.30.160.60:FF:000016">
    <property type="entry name" value="zinc finger protein 37 homolog"/>
    <property type="match status" value="1"/>
</dbReference>
<dbReference type="FunFam" id="3.30.160.60:FF:001026">
    <property type="entry name" value="zinc finger protein 383"/>
    <property type="match status" value="1"/>
</dbReference>
<dbReference type="FunFam" id="3.30.160.60:FF:002090">
    <property type="entry name" value="Zinc finger protein 473"/>
    <property type="match status" value="2"/>
</dbReference>
<dbReference type="FunFam" id="3.30.160.60:FF:000238">
    <property type="entry name" value="Zinc finger protein 485"/>
    <property type="match status" value="1"/>
</dbReference>
<dbReference type="FunFam" id="3.30.160.60:FF:001787">
    <property type="entry name" value="Zinc finger protein 619"/>
    <property type="match status" value="1"/>
</dbReference>
<dbReference type="FunFam" id="3.30.160.60:FF:000176">
    <property type="entry name" value="zinc finger protein 70"/>
    <property type="match status" value="1"/>
</dbReference>
<dbReference type="Gene3D" id="6.10.140.140">
    <property type="match status" value="1"/>
</dbReference>
<dbReference type="Gene3D" id="3.30.160.60">
    <property type="entry name" value="Classic Zinc Finger"/>
    <property type="match status" value="11"/>
</dbReference>
<dbReference type="InterPro" id="IPR001909">
    <property type="entry name" value="KRAB"/>
</dbReference>
<dbReference type="InterPro" id="IPR036051">
    <property type="entry name" value="KRAB_dom_sf"/>
</dbReference>
<dbReference type="InterPro" id="IPR050331">
    <property type="entry name" value="Zinc_finger"/>
</dbReference>
<dbReference type="InterPro" id="IPR036236">
    <property type="entry name" value="Znf_C2H2_sf"/>
</dbReference>
<dbReference type="InterPro" id="IPR013087">
    <property type="entry name" value="Znf_C2H2_type"/>
</dbReference>
<dbReference type="PANTHER" id="PTHR16515">
    <property type="entry name" value="PR DOMAIN ZINC FINGER PROTEIN"/>
    <property type="match status" value="1"/>
</dbReference>
<dbReference type="PANTHER" id="PTHR16515:SF57">
    <property type="entry name" value="ZINC FINGER PROTEIN 154-LIKE"/>
    <property type="match status" value="1"/>
</dbReference>
<dbReference type="Pfam" id="PF01352">
    <property type="entry name" value="KRAB"/>
    <property type="match status" value="1"/>
</dbReference>
<dbReference type="Pfam" id="PF00096">
    <property type="entry name" value="zf-C2H2"/>
    <property type="match status" value="8"/>
</dbReference>
<dbReference type="Pfam" id="PF13465">
    <property type="entry name" value="zf-H2C2_2"/>
    <property type="match status" value="1"/>
</dbReference>
<dbReference type="SMART" id="SM00349">
    <property type="entry name" value="KRAB"/>
    <property type="match status" value="1"/>
</dbReference>
<dbReference type="SMART" id="SM00355">
    <property type="entry name" value="ZnF_C2H2"/>
    <property type="match status" value="11"/>
</dbReference>
<dbReference type="SUPFAM" id="SSF57667">
    <property type="entry name" value="beta-beta-alpha zinc fingers"/>
    <property type="match status" value="7"/>
</dbReference>
<dbReference type="SUPFAM" id="SSF109640">
    <property type="entry name" value="KRAB domain (Kruppel-associated box)"/>
    <property type="match status" value="1"/>
</dbReference>
<dbReference type="PROSITE" id="PS50805">
    <property type="entry name" value="KRAB"/>
    <property type="match status" value="1"/>
</dbReference>
<dbReference type="PROSITE" id="PS00028">
    <property type="entry name" value="ZINC_FINGER_C2H2_1"/>
    <property type="match status" value="11"/>
</dbReference>
<dbReference type="PROSITE" id="PS50157">
    <property type="entry name" value="ZINC_FINGER_C2H2_2"/>
    <property type="match status" value="11"/>
</dbReference>
<gene>
    <name type="primary">ZNF354C</name>
    <name type="synonym">KID3</name>
</gene>
<sequence length="554" mass="64847">MAVDLLSAQEPVTFRDVAVFFSQDEWLHLDSAQRALYREVMLENYSSLVSLGIPFSMPKLIHQLQQGEDPCMVEREVPSDTRLGFKTWLETEALPHRQDIFIEETSQGMVKKESIKDGHWDINFEEAVEFESEIEEEQEKKPLRQMIDSHEKTISEDGNHTSLELGKSLFTNTALVTQQSVPIERIPNMYYTFGKDFKQNFDLMKCFQIYPGGKPHICNECGKSFKQNLHLIEHQRIHTGEKPYKCNECEKTFSHRSSLLSHQRIHTGEKPYKCNECEKAFSNSSTLIKHLRVHTGEKPYRCRECGKAFSQCSTLTVHQRIHTGEKLYKCGECEKAFNCRAKLHRHQRIHTGEKPYKCSECGKGYSQFTSLAEHQRFHTGEQLYTCLECGRTFTRIVTLIEHQRIHTGQKPYQCNECEKAFNQYSSFNEHRKIHTGEKLYTCEECGKAFGCKSNLYRHQRIHTGEKPYQCNQCGKAFSQYSFLTEHERIHTGEKLYKCMECGKAYSYRSNLCRHKKVHTKEKLYKWKEYGKPFICSSSLTQYQRFFKGDKAYEV</sequence>